<dbReference type="EMBL" id="AB016873">
    <property type="protein sequence ID" value="BAB10360.1"/>
    <property type="molecule type" value="Genomic_DNA"/>
</dbReference>
<dbReference type="EMBL" id="CP002688">
    <property type="protein sequence ID" value="AED94235.1"/>
    <property type="molecule type" value="Genomic_DNA"/>
</dbReference>
<dbReference type="RefSeq" id="NP_198597.1">
    <property type="nucleotide sequence ID" value="NM_123140.2"/>
</dbReference>
<dbReference type="SMR" id="Q9FIZ9"/>
<dbReference type="BioGRID" id="19010">
    <property type="interactions" value="17"/>
</dbReference>
<dbReference type="FunCoup" id="Q9FIZ9">
    <property type="interactions" value="45"/>
</dbReference>
<dbReference type="IntAct" id="Q9FIZ9">
    <property type="interactions" value="17"/>
</dbReference>
<dbReference type="STRING" id="3702.Q9FIZ9"/>
<dbReference type="iPTMnet" id="Q9FIZ9"/>
<dbReference type="PaxDb" id="3702-AT5G37810.1"/>
<dbReference type="ProteomicsDB" id="251153"/>
<dbReference type="EnsemblPlants" id="AT5G37810.1">
    <property type="protein sequence ID" value="AT5G37810.1"/>
    <property type="gene ID" value="AT5G37810"/>
</dbReference>
<dbReference type="GeneID" id="833759"/>
<dbReference type="Gramene" id="AT5G37810.1">
    <property type="protein sequence ID" value="AT5G37810.1"/>
    <property type="gene ID" value="AT5G37810"/>
</dbReference>
<dbReference type="KEGG" id="ath:AT5G37810"/>
<dbReference type="Araport" id="AT5G37810"/>
<dbReference type="TAIR" id="AT5G37810">
    <property type="gene designation" value="NIP4"/>
</dbReference>
<dbReference type="eggNOG" id="KOG0223">
    <property type="taxonomic scope" value="Eukaryota"/>
</dbReference>
<dbReference type="HOGENOM" id="CLU_020019_3_1_1"/>
<dbReference type="InParanoid" id="Q9FIZ9"/>
<dbReference type="OMA" id="ITFAVFR"/>
<dbReference type="PhylomeDB" id="Q9FIZ9"/>
<dbReference type="PRO" id="PR:Q9FIZ9"/>
<dbReference type="Proteomes" id="UP000006548">
    <property type="component" value="Chromosome 5"/>
</dbReference>
<dbReference type="ExpressionAtlas" id="Q9FIZ9">
    <property type="expression patterns" value="baseline"/>
</dbReference>
<dbReference type="GO" id="GO:0016020">
    <property type="term" value="C:membrane"/>
    <property type="evidence" value="ECO:0007669"/>
    <property type="project" value="UniProtKB-SubCell"/>
</dbReference>
<dbReference type="GO" id="GO:0015267">
    <property type="term" value="F:channel activity"/>
    <property type="evidence" value="ECO:0007669"/>
    <property type="project" value="InterPro"/>
</dbReference>
<dbReference type="CDD" id="cd00333">
    <property type="entry name" value="MIP"/>
    <property type="match status" value="1"/>
</dbReference>
<dbReference type="Gene3D" id="1.20.1080.10">
    <property type="entry name" value="Glycerol uptake facilitator protein"/>
    <property type="match status" value="1"/>
</dbReference>
<dbReference type="InterPro" id="IPR023271">
    <property type="entry name" value="Aquaporin-like"/>
</dbReference>
<dbReference type="InterPro" id="IPR034294">
    <property type="entry name" value="Aquaporin_transptr"/>
</dbReference>
<dbReference type="InterPro" id="IPR000425">
    <property type="entry name" value="MIP"/>
</dbReference>
<dbReference type="InterPro" id="IPR022357">
    <property type="entry name" value="MIP_CS"/>
</dbReference>
<dbReference type="NCBIfam" id="TIGR00861">
    <property type="entry name" value="MIP"/>
    <property type="match status" value="1"/>
</dbReference>
<dbReference type="PANTHER" id="PTHR45724">
    <property type="entry name" value="AQUAPORIN NIP2-1"/>
    <property type="match status" value="1"/>
</dbReference>
<dbReference type="PANTHER" id="PTHR45724:SF23">
    <property type="entry name" value="AQUAPORIN NIP4-1-RELATED"/>
    <property type="match status" value="1"/>
</dbReference>
<dbReference type="Pfam" id="PF00230">
    <property type="entry name" value="MIP"/>
    <property type="match status" value="1"/>
</dbReference>
<dbReference type="PRINTS" id="PR00783">
    <property type="entry name" value="MINTRINSICP"/>
</dbReference>
<dbReference type="SUPFAM" id="SSF81338">
    <property type="entry name" value="Aquaporin-like"/>
    <property type="match status" value="1"/>
</dbReference>
<dbReference type="PROSITE" id="PS00221">
    <property type="entry name" value="MIP"/>
    <property type="match status" value="1"/>
</dbReference>
<organism>
    <name type="scientific">Arabidopsis thaliana</name>
    <name type="common">Mouse-ear cress</name>
    <dbReference type="NCBI Taxonomy" id="3702"/>
    <lineage>
        <taxon>Eukaryota</taxon>
        <taxon>Viridiplantae</taxon>
        <taxon>Streptophyta</taxon>
        <taxon>Embryophyta</taxon>
        <taxon>Tracheophyta</taxon>
        <taxon>Spermatophyta</taxon>
        <taxon>Magnoliopsida</taxon>
        <taxon>eudicotyledons</taxon>
        <taxon>Gunneridae</taxon>
        <taxon>Pentapetalae</taxon>
        <taxon>rosids</taxon>
        <taxon>malvids</taxon>
        <taxon>Brassicales</taxon>
        <taxon>Brassicaceae</taxon>
        <taxon>Camelineae</taxon>
        <taxon>Arabidopsis</taxon>
    </lineage>
</organism>
<comment type="function">
    <text evidence="1">Potential aquaporin, which may facilitate the transport of water and small neutral solutes across cell membranes.</text>
</comment>
<comment type="subcellular location">
    <subcellularLocation>
        <location evidence="5">Membrane</location>
        <topology evidence="5">Multi-pass membrane protein</topology>
    </subcellularLocation>
</comment>
<comment type="domain">
    <text>Aquaporins contain two tandem repeats each containing three membrane-spanning domains and a pore-forming loop with the signature motif Asn-Pro-Ala (NPA).</text>
</comment>
<comment type="similarity">
    <text evidence="5">Belongs to the MIP/aquaporin (TC 1.A.8) family. NIP (TC 1.A.8.12) subfamily.</text>
</comment>
<proteinExistence type="inferred from homology"/>
<name>NIP41_ARATH</name>
<keyword id="KW-0007">Acetylation</keyword>
<keyword id="KW-0472">Membrane</keyword>
<keyword id="KW-0597">Phosphoprotein</keyword>
<keyword id="KW-1185">Reference proteome</keyword>
<keyword id="KW-0677">Repeat</keyword>
<keyword id="KW-0812">Transmembrane</keyword>
<keyword id="KW-1133">Transmembrane helix</keyword>
<keyword id="KW-0813">Transport</keyword>
<evidence type="ECO:0000250" key="1"/>
<evidence type="ECO:0000250" key="2">
    <source>
        <dbReference type="UniProtKB" id="P43286"/>
    </source>
</evidence>
<evidence type="ECO:0000250" key="3">
    <source>
        <dbReference type="UniProtKB" id="P61837"/>
    </source>
</evidence>
<evidence type="ECO:0000255" key="4"/>
<evidence type="ECO:0000305" key="5"/>
<protein>
    <recommendedName>
        <fullName>Putative aquaporin NIP4-1</fullName>
    </recommendedName>
    <alternativeName>
        <fullName>NOD26-like intrinsic protein 4-1</fullName>
        <shortName>AtNIP4;1</shortName>
    </alternativeName>
</protein>
<accession>Q9FIZ9</accession>
<feature type="chain" id="PRO_0000064066" description="Putative aquaporin NIP4-1">
    <location>
        <begin position="1"/>
        <end position="283"/>
    </location>
</feature>
<feature type="transmembrane region" description="Helical; Name=1" evidence="4">
    <location>
        <begin position="45"/>
        <end position="65"/>
    </location>
</feature>
<feature type="transmembrane region" description="Helical; Name=2" evidence="4">
    <location>
        <begin position="70"/>
        <end position="90"/>
    </location>
</feature>
<feature type="transmembrane region" description="Helical; Name=3" evidence="4">
    <location>
        <begin position="122"/>
        <end position="142"/>
    </location>
</feature>
<feature type="transmembrane region" description="Helical; Name=4" evidence="4">
    <location>
        <begin position="161"/>
        <end position="181"/>
    </location>
</feature>
<feature type="transmembrane region" description="Helical; Name=5" evidence="4">
    <location>
        <begin position="189"/>
        <end position="209"/>
    </location>
</feature>
<feature type="transmembrane region" description="Helical; Name=6" evidence="4">
    <location>
        <begin position="231"/>
        <end position="251"/>
    </location>
</feature>
<feature type="short sequence motif" description="NPA 1">
    <location>
        <begin position="102"/>
        <end position="104"/>
    </location>
</feature>
<feature type="short sequence motif" description="NPA 2">
    <location>
        <begin position="214"/>
        <end position="216"/>
    </location>
</feature>
<feature type="modified residue" description="N-acetylmethionine" evidence="3">
    <location>
        <position position="1"/>
    </location>
</feature>
<feature type="modified residue" description="Phosphoserine" evidence="2">
    <location>
        <position position="267"/>
    </location>
</feature>
<gene>
    <name type="primary">NIP4-1</name>
    <name type="ordered locus">At5g37810</name>
    <name type="ORF">K22F20.50</name>
</gene>
<sequence length="283" mass="30217">MSSHSDEIEEEQISRIEKGKGKDCQGGIETVICTSPSIVCLTQKLIAEMIGTYFIVFSGCGVVVVNVLYGGTITFPGICVTWGLIVMVMIYSTGHISGAHFNPAVTVTFAIFRRFPWHQVPLYIGAQFAGSLLASLTLRLMFKVTPEAFFGTTPADSPARALVAEIIISFLLMFVISGVATDNRAVGELAGIAVGMTIMVNVFVAGPISGASMNPARSLGPALVMGVYKHIWVYIVGPVLGVISGGFVYNLIRFTDKPLRELTKSASFLRAVSPSHKGSSSKT</sequence>
<reference key="1">
    <citation type="journal article" date="1998" name="DNA Res.">
        <title>Structural analysis of Arabidopsis thaliana chromosome 5. VII. Sequence features of the regions of 1,013,767 bp covered by sixteen physically assigned P1 and TAC clones.</title>
        <authorList>
            <person name="Nakamura Y."/>
            <person name="Sato S."/>
            <person name="Asamizu E."/>
            <person name="Kaneko T."/>
            <person name="Kotani H."/>
            <person name="Miyajima N."/>
            <person name="Tabata S."/>
        </authorList>
    </citation>
    <scope>NUCLEOTIDE SEQUENCE [LARGE SCALE GENOMIC DNA]</scope>
    <source>
        <strain>cv. Columbia</strain>
    </source>
</reference>
<reference key="2">
    <citation type="journal article" date="2017" name="Plant J.">
        <title>Araport11: a complete reannotation of the Arabidopsis thaliana reference genome.</title>
        <authorList>
            <person name="Cheng C.Y."/>
            <person name="Krishnakumar V."/>
            <person name="Chan A.P."/>
            <person name="Thibaud-Nissen F."/>
            <person name="Schobel S."/>
            <person name="Town C.D."/>
        </authorList>
    </citation>
    <scope>GENOME REANNOTATION</scope>
    <source>
        <strain>cv. Columbia</strain>
    </source>
</reference>
<reference key="3">
    <citation type="journal article" date="2002" name="Genome Biol.">
        <title>From genome to function: the Arabidopsis aquaporins.</title>
        <authorList>
            <person name="Quigley F."/>
            <person name="Rosenberg J.M."/>
            <person name="Shachar-Hill Y."/>
            <person name="Bohnert H.J."/>
        </authorList>
    </citation>
    <scope>NOMENCLATURE</scope>
</reference>